<protein>
    <recommendedName>
        <fullName>Dynein regulatory complex subunit 7</fullName>
    </recommendedName>
    <alternativeName>
        <fullName>Coiled-coil domain-containing protein lobo homolog</fullName>
    </alternativeName>
    <alternativeName>
        <fullName>Flagellar-associated protein 50</fullName>
    </alternativeName>
</protein>
<proteinExistence type="evidence at protein level"/>
<dbReference type="EMBL" id="DS496150">
    <property type="protein sequence ID" value="EDO99088.1"/>
    <property type="molecule type" value="Genomic_DNA"/>
</dbReference>
<dbReference type="RefSeq" id="XP_001699034.1">
    <property type="nucleotide sequence ID" value="XM_001698982.1"/>
</dbReference>
<dbReference type="SMR" id="A8JAM0"/>
<dbReference type="PaxDb" id="3055-EDO99088"/>
<dbReference type="eggNOG" id="KOG0379">
    <property type="taxonomic scope" value="Eukaryota"/>
</dbReference>
<dbReference type="eggNOG" id="KOG0619">
    <property type="taxonomic scope" value="Eukaryota"/>
</dbReference>
<dbReference type="HOGENOM" id="CLU_275527_0_0_1"/>
<dbReference type="GO" id="GO:0005930">
    <property type="term" value="C:axoneme"/>
    <property type="evidence" value="ECO:0000314"/>
    <property type="project" value="UniProtKB"/>
</dbReference>
<dbReference type="GO" id="GO:0031514">
    <property type="term" value="C:motile cilium"/>
    <property type="evidence" value="ECO:0000314"/>
    <property type="project" value="UniProtKB"/>
</dbReference>
<dbReference type="FunFam" id="2.120.10.80:FF:000245">
    <property type="entry name" value="Dynein regulatory complex subunit 7"/>
    <property type="match status" value="1"/>
</dbReference>
<dbReference type="Gene3D" id="2.120.10.80">
    <property type="entry name" value="Kelch-type beta propeller"/>
    <property type="match status" value="1"/>
</dbReference>
<dbReference type="Gene3D" id="3.80.10.10">
    <property type="entry name" value="Ribonuclease Inhibitor"/>
    <property type="match status" value="1"/>
</dbReference>
<dbReference type="InterPro" id="IPR033551">
    <property type="entry name" value="DRC7/lobo"/>
</dbReference>
<dbReference type="InterPro" id="IPR056292">
    <property type="entry name" value="DRC7_C"/>
</dbReference>
<dbReference type="InterPro" id="IPR015915">
    <property type="entry name" value="Kelch-typ_b-propeller"/>
</dbReference>
<dbReference type="InterPro" id="IPR001611">
    <property type="entry name" value="Leu-rich_rpt"/>
</dbReference>
<dbReference type="InterPro" id="IPR003591">
    <property type="entry name" value="Leu-rich_rpt_typical-subtyp"/>
</dbReference>
<dbReference type="InterPro" id="IPR032675">
    <property type="entry name" value="LRR_dom_sf"/>
</dbReference>
<dbReference type="InterPro" id="IPR056291">
    <property type="entry name" value="MORN_DRC7"/>
</dbReference>
<dbReference type="InterPro" id="IPR038765">
    <property type="entry name" value="Papain-like_cys_pep_sf"/>
</dbReference>
<dbReference type="PANTHER" id="PTHR35249">
    <property type="entry name" value="DYNEIN REGULATORY COMPLEX SUBUNIT 7"/>
    <property type="match status" value="1"/>
</dbReference>
<dbReference type="PANTHER" id="PTHR35249:SF2">
    <property type="entry name" value="DYNEIN REGULATORY COMPLEX SUBUNIT 7"/>
    <property type="match status" value="1"/>
</dbReference>
<dbReference type="Pfam" id="PF24671">
    <property type="entry name" value="DRC7_C"/>
    <property type="match status" value="1"/>
</dbReference>
<dbReference type="Pfam" id="PF24681">
    <property type="entry name" value="Kelch_KLHDC2_KLHL20_DRC7"/>
    <property type="match status" value="1"/>
</dbReference>
<dbReference type="Pfam" id="PF13516">
    <property type="entry name" value="LRR_6"/>
    <property type="match status" value="1"/>
</dbReference>
<dbReference type="Pfam" id="PF13855">
    <property type="entry name" value="LRR_8"/>
    <property type="match status" value="1"/>
</dbReference>
<dbReference type="Pfam" id="PF24667">
    <property type="entry name" value="MORN_DRC7"/>
    <property type="match status" value="2"/>
</dbReference>
<dbReference type="SMART" id="SM00364">
    <property type="entry name" value="LRR_BAC"/>
    <property type="match status" value="5"/>
</dbReference>
<dbReference type="SMART" id="SM00369">
    <property type="entry name" value="LRR_TYP"/>
    <property type="match status" value="5"/>
</dbReference>
<dbReference type="SUPFAM" id="SSF54001">
    <property type="entry name" value="Cysteine proteinases"/>
    <property type="match status" value="1"/>
</dbReference>
<dbReference type="SUPFAM" id="SSF117281">
    <property type="entry name" value="Kelch motif"/>
    <property type="match status" value="1"/>
</dbReference>
<dbReference type="SUPFAM" id="SSF52047">
    <property type="entry name" value="RNI-like"/>
    <property type="match status" value="1"/>
</dbReference>
<dbReference type="PROSITE" id="PS51450">
    <property type="entry name" value="LRR"/>
    <property type="match status" value="6"/>
</dbReference>
<gene>
    <name type="primary">DRC7</name>
    <name type="synonym">FAP50</name>
    <name type="ORF">CHLREDRAFT_177591</name>
</gene>
<accession>A8JAM0</accession>
<sequence>MAEGIGTFGTLSRDVLEERLMEARRTYRLNMGYAGLKQLPPGFVELVKKYNPHITELELSSNDLTDLPDELEEFRYLRILRLKYNQLKRIPAVVYRLPQLMVFDASGNRIQKVDDAIGHLSLLKELDVSGNEITTLPESLSTLPKLEVLQVENNRLELLPESLGELPGVIKMDLSTNNLRYLPASMGQLKKVQRIDVGNNLLTKVPPSMGHLKTLKEFNLRYNHLDDRYKAKVEEGLSKFLAFLREEEERERLEEIERLKPIGTPVGAYLEYRCKAEVGQVVKTDMGETTVDNRCWIRTGHTLTQVGSMLLIFGGQLQKDGSTTNDLFWMTMDRMEWHNQPCKGEKPPPRYNHAACYDEENNRLVVFGGRTAERKRLNDIYFLDLDSWTWFKPSTEGTAPTPREQAVATFWAGSMVLFGGHAIGGRTNDLFLLDLGAWQWSQPAFSGTAPSPRQACALCIGHGNLLFVHGGRNNFVLEDLHVMDFVSKNWTEIPCEGRVPPPRHSHRITVHRDQLYLLGGLDELGAQSVAMYRVALPAGQQDTYATSKPKWVEWDSELPYNKNRTATLWNGTISIYQLGSNTLGRVNDDDAEKGLDELRPKNAKRMRVQHTINTAGKMPRSFTQHSAHEARVLQYVQDFQRIFEELYPYRRPLYLTPRNECGVPKFVCTSLRPSQLVYTELYDLDGASQFVADFLSYEPLEDPLHPPDTLPSPMSALEWRAGDSFDMATVLASMLLGVGYNAFVVLGYAPGPVVQNDQRNTDLAATRTGAGAEEEEESGPCKFVHAWVMVLPGKREVTEAMFIEPSAGRKDVSYDLSDPTKWEPVFEDRGMRSRADGNADESETEGGGGLDDGEGVEAEVVPDIPPSWVPKLTIPRDAFDMRCPRHEIFARFGDCSRWDGMVERLVLYADEERTVVTEIRETFTRRRDKLRERRVYPQKDTTIEHFNRGSVFALKDILTVKNDRRGRKVIQYYTGRDDRLIYISATYAVDPLAPRPQPSALLEEYSSLLVAEKDCLQWVRDGEWEISEIIRTRTNQEQNITLETPYYDIVRIKAEESEEVREKALKALKDRLIERANIIQARLDEESAALAKRQQTFHRDRDQMSAAEEEDYERQTEESMFRIHILERRLRRHEEQALHKYYELDAKLRADGRLAALLN</sequence>
<evidence type="ECO:0000255" key="1"/>
<evidence type="ECO:0000256" key="2">
    <source>
        <dbReference type="SAM" id="MobiDB-lite"/>
    </source>
</evidence>
<evidence type="ECO:0000269" key="3">
    <source>
    </source>
</evidence>
<evidence type="ECO:0000269" key="4">
    <source>
    </source>
</evidence>
<evidence type="ECO:0000269" key="5">
    <source>
    </source>
</evidence>
<evidence type="ECO:0000269" key="6">
    <source>
    </source>
</evidence>
<evidence type="ECO:0000305" key="7"/>
<comment type="function">
    <text evidence="3 5 6">Component of the nexin-dynein regulatory complex (N-DRC) a key regulator of ciliary/flagellar motility which maintains the alignment and integrity of the distal axoneme and regulates microtubule sliding in motile axonemes (PubMed:23427265, PubMed:25411337). Involved in the regulation of flagellar motility (PubMed:21289096).</text>
</comment>
<comment type="subunit">
    <text evidence="5 6">Component of the nexin-dynein regulatory complex (N-DRC) (PubMed:23427265, PubMed:25411337). Interacts with DRC5 (PubMed:23427265).</text>
</comment>
<comment type="subcellular location">
    <subcellularLocation>
        <location evidence="3">Cell projection</location>
        <location evidence="3">Cilium</location>
        <location evidence="3">Flagellum</location>
    </subcellularLocation>
    <subcellularLocation>
        <location evidence="4">Cytoplasm</location>
        <location evidence="4">Cytoskeleton</location>
        <location evidence="4">Cilium axoneme</location>
    </subcellularLocation>
    <subcellularLocation>
        <location evidence="5 6">Cytoplasm</location>
        <location evidence="5 6">Cytoskeleton</location>
        <location evidence="5 6">Flagellum axoneme</location>
    </subcellularLocation>
    <text evidence="3">Associated with the outer doublet microtubules (OD).</text>
</comment>
<comment type="PTM">
    <text evidence="4">Phosphorylated.</text>
</comment>
<comment type="similarity">
    <text evidence="7">Belongs to the DRC7 family.</text>
</comment>
<reference key="1">
    <citation type="journal article" date="2007" name="Science">
        <title>The Chlamydomonas genome reveals the evolution of key animal and plant functions.</title>
        <authorList>
            <person name="Merchant S.S."/>
            <person name="Prochnik S.E."/>
            <person name="Vallon O."/>
            <person name="Harris E.H."/>
            <person name="Karpowicz S.J."/>
            <person name="Witman G.B."/>
            <person name="Terry A."/>
            <person name="Salamov A."/>
            <person name="Fritz-Laylin L.K."/>
            <person name="Marechal-Drouard L."/>
            <person name="Marshall W.F."/>
            <person name="Qu L.H."/>
            <person name="Nelson D.R."/>
            <person name="Sanderfoot A.A."/>
            <person name="Spalding M.H."/>
            <person name="Kapitonov V.V."/>
            <person name="Ren Q."/>
            <person name="Ferris P."/>
            <person name="Lindquist E."/>
            <person name="Shapiro H."/>
            <person name="Lucas S.M."/>
            <person name="Grimwood J."/>
            <person name="Schmutz J."/>
            <person name="Cardol P."/>
            <person name="Cerutti H."/>
            <person name="Chanfreau G."/>
            <person name="Chen C.L."/>
            <person name="Cognat V."/>
            <person name="Croft M.T."/>
            <person name="Dent R."/>
            <person name="Dutcher S."/>
            <person name="Fernandez E."/>
            <person name="Fukuzawa H."/>
            <person name="Gonzalez-Ballester D."/>
            <person name="Gonzalez-Halphen D."/>
            <person name="Hallmann A."/>
            <person name="Hanikenne M."/>
            <person name="Hippler M."/>
            <person name="Inwood W."/>
            <person name="Jabbari K."/>
            <person name="Kalanon M."/>
            <person name="Kuras R."/>
            <person name="Lefebvre P.A."/>
            <person name="Lemaire S.D."/>
            <person name="Lobanov A.V."/>
            <person name="Lohr M."/>
            <person name="Manuell A."/>
            <person name="Meier I."/>
            <person name="Mets L."/>
            <person name="Mittag M."/>
            <person name="Mittelmeier T."/>
            <person name="Moroney J.V."/>
            <person name="Moseley J."/>
            <person name="Napoli C."/>
            <person name="Nedelcu A.M."/>
            <person name="Niyogi K."/>
            <person name="Novoselov S.V."/>
            <person name="Paulsen I.T."/>
            <person name="Pazour G.J."/>
            <person name="Purton S."/>
            <person name="Ral J.P."/>
            <person name="Riano-Pachon D.M."/>
            <person name="Riekhof W."/>
            <person name="Rymarquis L."/>
            <person name="Schroda M."/>
            <person name="Stern D."/>
            <person name="Umen J."/>
            <person name="Willows R."/>
            <person name="Wilson N."/>
            <person name="Zimmer S.L."/>
            <person name="Allmer J."/>
            <person name="Balk J."/>
            <person name="Bisova K."/>
            <person name="Chen C.J."/>
            <person name="Elias M."/>
            <person name="Gendler K."/>
            <person name="Hauser C."/>
            <person name="Lamb M.R."/>
            <person name="Ledford H."/>
            <person name="Long J.C."/>
            <person name="Minagawa J."/>
            <person name="Page M.D."/>
            <person name="Pan J."/>
            <person name="Pootakham W."/>
            <person name="Roje S."/>
            <person name="Rose A."/>
            <person name="Stahlberg E."/>
            <person name="Terauchi A.M."/>
            <person name="Yang P."/>
            <person name="Ball S."/>
            <person name="Bowler C."/>
            <person name="Dieckmann C.L."/>
            <person name="Gladyshev V.N."/>
            <person name="Green P."/>
            <person name="Jorgensen R."/>
            <person name="Mayfield S."/>
            <person name="Mueller-Roeber B."/>
            <person name="Rajamani S."/>
            <person name="Sayre R.T."/>
            <person name="Brokstein P."/>
            <person name="Dubchak I."/>
            <person name="Goodstein D."/>
            <person name="Hornick L."/>
            <person name="Huang Y.W."/>
            <person name="Jhaveri J."/>
            <person name="Luo Y."/>
            <person name="Martinez D."/>
            <person name="Ngau W.C."/>
            <person name="Otillar B."/>
            <person name="Poliakov A."/>
            <person name="Porter A."/>
            <person name="Szajkowski L."/>
            <person name="Werner G."/>
            <person name="Zhou K."/>
            <person name="Grigoriev I.V."/>
            <person name="Rokhsar D.S."/>
            <person name="Grossman A.R."/>
        </authorList>
    </citation>
    <scope>NUCLEOTIDE SEQUENCE [LARGE SCALE GENOMIC DNA]</scope>
    <source>
        <strain>CC-503</strain>
    </source>
</reference>
<reference key="2">
    <citation type="journal article" date="2011" name="Mol. Biol. Cell">
        <title>Regulation of flagellar motility by the conserved flagellar protein CG34110/Ccdc135/FAP50.</title>
        <authorList>
            <person name="Yang Y."/>
            <person name="Cochran D.A."/>
            <person name="Gargano M.D."/>
            <person name="King I."/>
            <person name="Samhat N.K."/>
            <person name="Burger B.P."/>
            <person name="Sabourin K.R."/>
            <person name="Hou Y."/>
            <person name="Awata J."/>
            <person name="Parry D.A."/>
            <person name="Marshall W.F."/>
            <person name="Witman G.B."/>
            <person name="Lu X."/>
        </authorList>
    </citation>
    <scope>FUNCTION</scope>
    <scope>SUBCELLULAR LOCATION</scope>
    <scope>TISSUE SPECIFICITY</scope>
</reference>
<reference key="3">
    <citation type="journal article" date="2011" name="J. Biol. Chem.">
        <title>Building blocks of the nexin-dynein regulatory complex in Chlamydomonas flagella.</title>
        <authorList>
            <person name="Lin J."/>
            <person name="Tritschler D."/>
            <person name="Song K."/>
            <person name="Barber C.F."/>
            <person name="Cobb J.S."/>
            <person name="Porter M.E."/>
            <person name="Nicastro D."/>
        </authorList>
    </citation>
    <scope>IDENTIFICATION BY MASS SPECTROMETRY</scope>
    <scope>IDENTIFICATION IN THE N-DRC COMPLEX</scope>
    <scope>SUBCELLULAR LOCATION</scope>
    <scope>PHOSPHORYLATION</scope>
</reference>
<reference key="4">
    <citation type="journal article" date="2013" name="Mol. Biol. Cell">
        <title>The N-DRC forms a conserved biochemical complex that maintains outer doublet alignment and limits microtubule sliding in motile axonemes.</title>
        <authorList>
            <person name="Bower R."/>
            <person name="Tritschler D."/>
            <person name="Vanderwaal K."/>
            <person name="Perrone C.A."/>
            <person name="Mueller J."/>
            <person name="Fox L."/>
            <person name="Sale W.S."/>
            <person name="Porter M.E."/>
        </authorList>
    </citation>
    <scope>FUNCTION</scope>
    <scope>SUBUNIT</scope>
    <scope>SUBCELLULAR LOCATION</scope>
    <scope>INTERACTION WITH DRC5</scope>
    <scope>IDENTIFICATION BY MASS SPECTROMETRY</scope>
</reference>
<reference key="5">
    <citation type="journal article" date="2015" name="Mol. Biol. Cell">
        <title>Detailed structural and biochemical characterization of the nexin-dynein regulatory complex.</title>
        <authorList>
            <person name="Oda T."/>
            <person name="Yanagisawa H."/>
            <person name="Kikkawa M."/>
        </authorList>
    </citation>
    <scope>FUNCTION</scope>
    <scope>SUBUNIT</scope>
    <scope>SUBCELLULAR LOCATION</scope>
</reference>
<feature type="chain" id="PRO_0000415788" description="Dynein regulatory complex subunit 7">
    <location>
        <begin position="1"/>
        <end position="1159" status="greater than"/>
    </location>
</feature>
<feature type="repeat" description="LRR 1">
    <location>
        <begin position="21"/>
        <end position="46"/>
    </location>
</feature>
<feature type="repeat" description="LRR 2">
    <location>
        <begin position="51"/>
        <end position="74"/>
    </location>
</feature>
<feature type="repeat" description="LRR 3">
    <location>
        <begin position="75"/>
        <end position="97"/>
    </location>
</feature>
<feature type="repeat" description="LRR 4">
    <location>
        <begin position="99"/>
        <end position="120"/>
    </location>
</feature>
<feature type="repeat" description="LRR 5">
    <location>
        <begin position="121"/>
        <end position="143"/>
    </location>
</feature>
<feature type="repeat" description="LRR 6">
    <location>
        <begin position="144"/>
        <end position="166"/>
    </location>
</feature>
<feature type="repeat" description="LRR 7">
    <location>
        <begin position="168"/>
        <end position="189"/>
    </location>
</feature>
<feature type="repeat" description="LRR 8">
    <location>
        <begin position="190"/>
        <end position="212"/>
    </location>
</feature>
<feature type="repeat" description="LRR 9">
    <location>
        <begin position="214"/>
        <end position="235"/>
    </location>
</feature>
<feature type="repeat" description="Kelch 1">
    <location>
        <begin position="309"/>
        <end position="360"/>
    </location>
</feature>
<feature type="repeat" description="Kelch 2">
    <location>
        <begin position="363"/>
        <end position="413"/>
    </location>
</feature>
<feature type="repeat" description="Kelch 3">
    <location>
        <begin position="415"/>
        <end position="463"/>
    </location>
</feature>
<feature type="repeat" description="Kelch 4">
    <location>
        <begin position="465"/>
        <end position="513"/>
    </location>
</feature>
<feature type="repeat" description="Kelch 5">
    <location>
        <begin position="515"/>
        <end position="571"/>
    </location>
</feature>
<feature type="region of interest" description="Disordered" evidence="2">
    <location>
        <begin position="827"/>
        <end position="857"/>
    </location>
</feature>
<feature type="coiled-coil region" evidence="1">
    <location>
        <begin position="1050"/>
        <end position="1137"/>
    </location>
</feature>
<feature type="compositionally biased region" description="Basic and acidic residues" evidence="2">
    <location>
        <begin position="827"/>
        <end position="837"/>
    </location>
</feature>
<feature type="non-terminal residue">
    <location>
        <position position="1159"/>
    </location>
</feature>
<organism>
    <name type="scientific">Chlamydomonas reinhardtii</name>
    <name type="common">Chlamydomonas smithii</name>
    <dbReference type="NCBI Taxonomy" id="3055"/>
    <lineage>
        <taxon>Eukaryota</taxon>
        <taxon>Viridiplantae</taxon>
        <taxon>Chlorophyta</taxon>
        <taxon>core chlorophytes</taxon>
        <taxon>Chlorophyceae</taxon>
        <taxon>CS clade</taxon>
        <taxon>Chlamydomonadales</taxon>
        <taxon>Chlamydomonadaceae</taxon>
        <taxon>Chlamydomonas</taxon>
    </lineage>
</organism>
<keyword id="KW-0966">Cell projection</keyword>
<keyword id="KW-0969">Cilium</keyword>
<keyword id="KW-0175">Coiled coil</keyword>
<keyword id="KW-0963">Cytoplasm</keyword>
<keyword id="KW-0206">Cytoskeleton</keyword>
<keyword id="KW-0282">Flagellum</keyword>
<keyword id="KW-0880">Kelch repeat</keyword>
<keyword id="KW-0433">Leucine-rich repeat</keyword>
<keyword id="KW-0677">Repeat</keyword>
<name>DRC7_CHLRE</name>